<reference key="1">
    <citation type="journal article" date="1998" name="Science">
        <title>Genome sequence of the nematode C. elegans: a platform for investigating biology.</title>
        <authorList>
            <consortium name="The C. elegans sequencing consortium"/>
        </authorList>
    </citation>
    <scope>NUCLEOTIDE SEQUENCE [LARGE SCALE GENOMIC DNA]</scope>
    <source>
        <strain>Bristol N2</strain>
    </source>
</reference>
<accession>O76387</accession>
<comment type="function">
    <text evidence="1">The natural substrate for this enzyme may be peptidyl-tRNAs which drop off the ribosome during protein synthesis.</text>
</comment>
<comment type="catalytic activity">
    <reaction>
        <text>an N-acyl-L-alpha-aminoacyl-tRNA + H2O = an N-acyl-L-amino acid + a tRNA + H(+)</text>
        <dbReference type="Rhea" id="RHEA:54448"/>
        <dbReference type="Rhea" id="RHEA-COMP:10123"/>
        <dbReference type="Rhea" id="RHEA-COMP:13883"/>
        <dbReference type="ChEBI" id="CHEBI:15377"/>
        <dbReference type="ChEBI" id="CHEBI:15378"/>
        <dbReference type="ChEBI" id="CHEBI:59874"/>
        <dbReference type="ChEBI" id="CHEBI:78442"/>
        <dbReference type="ChEBI" id="CHEBI:138191"/>
        <dbReference type="EC" id="3.1.1.29"/>
    </reaction>
</comment>
<comment type="similarity">
    <text evidence="4">Belongs to the PTH2 family.</text>
</comment>
<sequence>MSENIPDIDPNELLPNAPGQHQDLGVDNPPEPDNASIRAERGSPTPSSVTVDNAPSLPDRSFSHLPINDPFSGEIPEVPIPSSAISISSQALSDPVPTPSDTSRPGILRNDEQGSTSSHPVDPQEPNEVNNEYLAHLLDLGFDEYTAVLALKRTNSAGVEQAVAWIVERSNESDFDEDSSSSENEADEEMGAVQSVAGRTHKMVLVANMSLKMGTGKIAAQVGHATLGVYRQAMNSENGQNAIAAWTRHGQVKIVVKGQSTEQLMDLCKVAKDAGCYYYLVQDAGYTQIPAGSRTVLGIFGTVEQVDSVTGGLKLL</sequence>
<protein>
    <recommendedName>
        <fullName>Probable peptidyl-tRNA hydrolase 2</fullName>
        <shortName>PTH 2</shortName>
        <ecNumber>3.1.1.29</ecNumber>
    </recommendedName>
</protein>
<dbReference type="EC" id="3.1.1.29"/>
<dbReference type="EMBL" id="FO080610">
    <property type="protein sequence ID" value="CCD65135.1"/>
    <property type="molecule type" value="Genomic_DNA"/>
</dbReference>
<dbReference type="PIR" id="T33180">
    <property type="entry name" value="T33180"/>
</dbReference>
<dbReference type="RefSeq" id="NP_001367534.1">
    <property type="nucleotide sequence ID" value="NM_001380643.2"/>
</dbReference>
<dbReference type="RefSeq" id="NP_504461.1">
    <property type="nucleotide sequence ID" value="NM_072060.4"/>
</dbReference>
<dbReference type="SMR" id="O76387"/>
<dbReference type="BioGRID" id="43986">
    <property type="interactions" value="2"/>
</dbReference>
<dbReference type="DIP" id="DIP-59880N"/>
<dbReference type="FunCoup" id="O76387">
    <property type="interactions" value="1505"/>
</dbReference>
<dbReference type="IntAct" id="O76387">
    <property type="interactions" value="2"/>
</dbReference>
<dbReference type="STRING" id="6239.C24G6.8.1"/>
<dbReference type="iPTMnet" id="O76387"/>
<dbReference type="PaxDb" id="6239-C24G6.8.1"/>
<dbReference type="PeptideAtlas" id="O76387"/>
<dbReference type="EnsemblMetazoa" id="C24G6.8.1">
    <property type="protein sequence ID" value="C24G6.8.1"/>
    <property type="gene ID" value="WBGene00016062"/>
</dbReference>
<dbReference type="GeneID" id="178937"/>
<dbReference type="UCSC" id="C24G6.8.1">
    <property type="organism name" value="c. elegans"/>
</dbReference>
<dbReference type="AGR" id="WB:WBGene00016062"/>
<dbReference type="WormBase" id="C24G6.8">
    <property type="protein sequence ID" value="CE17464"/>
    <property type="gene ID" value="WBGene00016062"/>
</dbReference>
<dbReference type="eggNOG" id="KOG3282">
    <property type="taxonomic scope" value="Eukaryota"/>
</dbReference>
<dbReference type="GeneTree" id="ENSGT00940000165995"/>
<dbReference type="HOGENOM" id="CLU_053028_0_0_1"/>
<dbReference type="InParanoid" id="O76387"/>
<dbReference type="OMA" id="AISWIFE"/>
<dbReference type="OrthoDB" id="1733656at2759"/>
<dbReference type="PhylomeDB" id="O76387"/>
<dbReference type="Reactome" id="R-CEL-5689880">
    <property type="pathway name" value="Ub-specific processing proteases"/>
</dbReference>
<dbReference type="PRO" id="PR:O76387"/>
<dbReference type="Proteomes" id="UP000001940">
    <property type="component" value="Chromosome V"/>
</dbReference>
<dbReference type="Bgee" id="WBGene00016062">
    <property type="expression patterns" value="Expressed in germ line (C elegans) and 4 other cell types or tissues"/>
</dbReference>
<dbReference type="GO" id="GO:0005829">
    <property type="term" value="C:cytosol"/>
    <property type="evidence" value="ECO:0000318"/>
    <property type="project" value="GO_Central"/>
</dbReference>
<dbReference type="GO" id="GO:0004045">
    <property type="term" value="F:peptidyl-tRNA hydrolase activity"/>
    <property type="evidence" value="ECO:0000318"/>
    <property type="project" value="GO_Central"/>
</dbReference>
<dbReference type="CDD" id="cd02430">
    <property type="entry name" value="PTH2"/>
    <property type="match status" value="1"/>
</dbReference>
<dbReference type="FunFam" id="3.40.1490.10:FF:000002">
    <property type="entry name" value="Peptidyl-tRNA hydrolase 2, mitochondrial"/>
    <property type="match status" value="1"/>
</dbReference>
<dbReference type="FunFam" id="1.10.8.10:FF:000183">
    <property type="entry name" value="Probable peptidyl-tRNA hydrolase 2"/>
    <property type="match status" value="1"/>
</dbReference>
<dbReference type="Gene3D" id="3.40.1490.10">
    <property type="entry name" value="Bit1"/>
    <property type="match status" value="1"/>
</dbReference>
<dbReference type="Gene3D" id="1.10.8.10">
    <property type="entry name" value="DNA helicase RuvA subunit, C-terminal domain"/>
    <property type="match status" value="1"/>
</dbReference>
<dbReference type="InterPro" id="IPR023476">
    <property type="entry name" value="Pep_tRNA_hydro_II_dom_sf"/>
</dbReference>
<dbReference type="InterPro" id="IPR002833">
    <property type="entry name" value="PTH2"/>
</dbReference>
<dbReference type="InterPro" id="IPR015940">
    <property type="entry name" value="UBA"/>
</dbReference>
<dbReference type="InterPro" id="IPR009060">
    <property type="entry name" value="UBA-like_sf"/>
</dbReference>
<dbReference type="NCBIfam" id="TIGR00283">
    <property type="entry name" value="arch_pth2"/>
    <property type="match status" value="1"/>
</dbReference>
<dbReference type="PANTHER" id="PTHR12649">
    <property type="entry name" value="PEPTIDYL-TRNA HYDROLASE 2"/>
    <property type="match status" value="1"/>
</dbReference>
<dbReference type="PANTHER" id="PTHR12649:SF11">
    <property type="entry name" value="PEPTIDYL-TRNA HYDROLASE 2, MITOCHONDRIAL"/>
    <property type="match status" value="1"/>
</dbReference>
<dbReference type="Pfam" id="PF01981">
    <property type="entry name" value="PTH2"/>
    <property type="match status" value="1"/>
</dbReference>
<dbReference type="Pfam" id="PF22562">
    <property type="entry name" value="UBA_7"/>
    <property type="match status" value="1"/>
</dbReference>
<dbReference type="SUPFAM" id="SSF102462">
    <property type="entry name" value="Peptidyl-tRNA hydrolase II"/>
    <property type="match status" value="1"/>
</dbReference>
<dbReference type="SUPFAM" id="SSF46934">
    <property type="entry name" value="UBA-like"/>
    <property type="match status" value="1"/>
</dbReference>
<dbReference type="PROSITE" id="PS50030">
    <property type="entry name" value="UBA"/>
    <property type="match status" value="1"/>
</dbReference>
<evidence type="ECO:0000250" key="1"/>
<evidence type="ECO:0000255" key="2">
    <source>
        <dbReference type="PROSITE-ProRule" id="PRU00212"/>
    </source>
</evidence>
<evidence type="ECO:0000256" key="3">
    <source>
        <dbReference type="SAM" id="MobiDB-lite"/>
    </source>
</evidence>
<evidence type="ECO:0000305" key="4"/>
<name>PTH2_CAEEL</name>
<gene>
    <name type="ORF">C24G6.8</name>
</gene>
<organism>
    <name type="scientific">Caenorhabditis elegans</name>
    <dbReference type="NCBI Taxonomy" id="6239"/>
    <lineage>
        <taxon>Eukaryota</taxon>
        <taxon>Metazoa</taxon>
        <taxon>Ecdysozoa</taxon>
        <taxon>Nematoda</taxon>
        <taxon>Chromadorea</taxon>
        <taxon>Rhabditida</taxon>
        <taxon>Rhabditina</taxon>
        <taxon>Rhabditomorpha</taxon>
        <taxon>Rhabditoidea</taxon>
        <taxon>Rhabditidae</taxon>
        <taxon>Peloderinae</taxon>
        <taxon>Caenorhabditis</taxon>
    </lineage>
</organism>
<feature type="chain" id="PRO_0000120283" description="Probable peptidyl-tRNA hydrolase 2">
    <location>
        <begin position="1"/>
        <end position="316"/>
    </location>
</feature>
<feature type="domain" description="UBA" evidence="2">
    <location>
        <begin position="128"/>
        <end position="169"/>
    </location>
</feature>
<feature type="region of interest" description="Disordered" evidence="3">
    <location>
        <begin position="1"/>
        <end position="127"/>
    </location>
</feature>
<feature type="region of interest" description="Disordered" evidence="3">
    <location>
        <begin position="170"/>
        <end position="193"/>
    </location>
</feature>
<feature type="compositionally biased region" description="Polar residues" evidence="3">
    <location>
        <begin position="44"/>
        <end position="53"/>
    </location>
</feature>
<feature type="compositionally biased region" description="Low complexity" evidence="3">
    <location>
        <begin position="75"/>
        <end position="89"/>
    </location>
</feature>
<feature type="compositionally biased region" description="Acidic residues" evidence="3">
    <location>
        <begin position="173"/>
        <end position="190"/>
    </location>
</feature>
<proteinExistence type="inferred from homology"/>
<keyword id="KW-0378">Hydrolase</keyword>
<keyword id="KW-1185">Reference proteome</keyword>